<accession>Q9VM92</accession>
<accession>Q5BHY1</accession>
<organism>
    <name type="scientific">Drosophila melanogaster</name>
    <name type="common">Fruit fly</name>
    <dbReference type="NCBI Taxonomy" id="7227"/>
    <lineage>
        <taxon>Eukaryota</taxon>
        <taxon>Metazoa</taxon>
        <taxon>Ecdysozoa</taxon>
        <taxon>Arthropoda</taxon>
        <taxon>Hexapoda</taxon>
        <taxon>Insecta</taxon>
        <taxon>Pterygota</taxon>
        <taxon>Neoptera</taxon>
        <taxon>Endopterygota</taxon>
        <taxon>Diptera</taxon>
        <taxon>Brachycera</taxon>
        <taxon>Muscomorpha</taxon>
        <taxon>Ephydroidea</taxon>
        <taxon>Drosophilidae</taxon>
        <taxon>Drosophila</taxon>
        <taxon>Sophophora</taxon>
    </lineage>
</organism>
<name>TTL3B_DROME</name>
<dbReference type="EC" id="6.3.2.-"/>
<dbReference type="EMBL" id="AE014134">
    <property type="protein sequence ID" value="AAF52431.2"/>
    <property type="molecule type" value="Genomic_DNA"/>
</dbReference>
<dbReference type="EMBL" id="BT021443">
    <property type="protein sequence ID" value="AAX33591.1"/>
    <property type="molecule type" value="mRNA"/>
</dbReference>
<dbReference type="RefSeq" id="NP_609068.2">
    <property type="nucleotide sequence ID" value="NM_135224.3"/>
</dbReference>
<dbReference type="SMR" id="Q9VM92"/>
<dbReference type="BioGRID" id="60098">
    <property type="interactions" value="3"/>
</dbReference>
<dbReference type="IntAct" id="Q9VM92">
    <property type="interactions" value="2"/>
</dbReference>
<dbReference type="STRING" id="7227.FBpp0289333"/>
<dbReference type="PaxDb" id="7227-FBpp0289333"/>
<dbReference type="DNASU" id="33946"/>
<dbReference type="EnsemblMetazoa" id="FBtr0300056">
    <property type="protein sequence ID" value="FBpp0289333"/>
    <property type="gene ID" value="FBgn0031853"/>
</dbReference>
<dbReference type="GeneID" id="33946"/>
<dbReference type="KEGG" id="dme:Dmel_CG11201"/>
<dbReference type="UCSC" id="CG11201-RB">
    <property type="organism name" value="d. melanogaster"/>
</dbReference>
<dbReference type="AGR" id="FB:FBgn0031853"/>
<dbReference type="CTD" id="33946"/>
<dbReference type="FlyBase" id="FBgn0031853">
    <property type="gene designation" value="TTLL3B"/>
</dbReference>
<dbReference type="VEuPathDB" id="VectorBase:FBgn0031853"/>
<dbReference type="eggNOG" id="KOG2157">
    <property type="taxonomic scope" value="Eukaryota"/>
</dbReference>
<dbReference type="GeneTree" id="ENSGT00940000168830"/>
<dbReference type="HOGENOM" id="CLU_010131_5_0_1"/>
<dbReference type="InParanoid" id="Q9VM92"/>
<dbReference type="OMA" id="AEQERWY"/>
<dbReference type="OrthoDB" id="202825at2759"/>
<dbReference type="PhylomeDB" id="Q9VM92"/>
<dbReference type="BioGRID-ORCS" id="33946">
    <property type="hits" value="0 hits in 3 CRISPR screens"/>
</dbReference>
<dbReference type="GenomeRNAi" id="33946"/>
<dbReference type="PRO" id="PR:Q9VM92"/>
<dbReference type="Proteomes" id="UP000000803">
    <property type="component" value="Chromosome 2L"/>
</dbReference>
<dbReference type="Bgee" id="FBgn0031853">
    <property type="expression patterns" value="Expressed in mid-late elongation-stage spermatid (Drosophila) in testis and 21 other cell types or tissues"/>
</dbReference>
<dbReference type="GO" id="GO:0005930">
    <property type="term" value="C:axoneme"/>
    <property type="evidence" value="ECO:0000314"/>
    <property type="project" value="UniProtKB"/>
</dbReference>
<dbReference type="GO" id="GO:0005874">
    <property type="term" value="C:microtubule"/>
    <property type="evidence" value="ECO:0007669"/>
    <property type="project" value="UniProtKB-KW"/>
</dbReference>
<dbReference type="GO" id="GO:0015630">
    <property type="term" value="C:microtubule cytoskeleton"/>
    <property type="evidence" value="ECO:0000314"/>
    <property type="project" value="UniProtKB"/>
</dbReference>
<dbReference type="GO" id="GO:0005634">
    <property type="term" value="C:nucleus"/>
    <property type="evidence" value="ECO:0000314"/>
    <property type="project" value="UniProtKB"/>
</dbReference>
<dbReference type="GO" id="GO:0036126">
    <property type="term" value="C:sperm flagellum"/>
    <property type="evidence" value="ECO:0000318"/>
    <property type="project" value="GO_Central"/>
</dbReference>
<dbReference type="GO" id="GO:0005524">
    <property type="term" value="F:ATP binding"/>
    <property type="evidence" value="ECO:0007669"/>
    <property type="project" value="UniProtKB-KW"/>
</dbReference>
<dbReference type="GO" id="GO:0070735">
    <property type="term" value="F:protein-glycine ligase activity"/>
    <property type="evidence" value="ECO:0000314"/>
    <property type="project" value="UniProtKB"/>
</dbReference>
<dbReference type="GO" id="GO:0070737">
    <property type="term" value="F:protein-glycine ligase activity, elongating"/>
    <property type="evidence" value="ECO:0000314"/>
    <property type="project" value="UniProtKB"/>
</dbReference>
<dbReference type="GO" id="GO:0070736">
    <property type="term" value="F:protein-glycine ligase activity, initiating"/>
    <property type="evidence" value="ECO:0000314"/>
    <property type="project" value="UniProtKB"/>
</dbReference>
<dbReference type="GO" id="GO:0035082">
    <property type="term" value="P:axoneme assembly"/>
    <property type="evidence" value="ECO:0000315"/>
    <property type="project" value="UniProtKB"/>
</dbReference>
<dbReference type="GO" id="GO:0060271">
    <property type="term" value="P:cilium assembly"/>
    <property type="evidence" value="ECO:0000315"/>
    <property type="project" value="UniProtKB"/>
</dbReference>
<dbReference type="GO" id="GO:0030317">
    <property type="term" value="P:flagellated sperm motility"/>
    <property type="evidence" value="ECO:0000318"/>
    <property type="project" value="GO_Central"/>
</dbReference>
<dbReference type="GO" id="GO:0018094">
    <property type="term" value="P:protein polyglycylation"/>
    <property type="evidence" value="ECO:0000314"/>
    <property type="project" value="UniProtKB"/>
</dbReference>
<dbReference type="GO" id="GO:0007291">
    <property type="term" value="P:sperm individualization"/>
    <property type="evidence" value="ECO:0000315"/>
    <property type="project" value="FlyBase"/>
</dbReference>
<dbReference type="GO" id="GO:0007283">
    <property type="term" value="P:spermatogenesis"/>
    <property type="evidence" value="ECO:0000315"/>
    <property type="project" value="UniProtKB"/>
</dbReference>
<dbReference type="FunFam" id="3.30.470.20:FF:000102">
    <property type="entry name" value="Tubulin glycylase 3B"/>
    <property type="match status" value="1"/>
</dbReference>
<dbReference type="Gene3D" id="3.30.470.20">
    <property type="entry name" value="ATP-grasp fold, B domain"/>
    <property type="match status" value="1"/>
</dbReference>
<dbReference type="InterPro" id="IPR004344">
    <property type="entry name" value="TTL/TTLL_fam"/>
</dbReference>
<dbReference type="InterPro" id="IPR051437">
    <property type="entry name" value="TTLL_monoglycylase"/>
</dbReference>
<dbReference type="PANTHER" id="PTHR45870">
    <property type="entry name" value="TUBULIN MONOGLYCYLASE TTLL3"/>
    <property type="match status" value="1"/>
</dbReference>
<dbReference type="PANTHER" id="PTHR45870:SF2">
    <property type="entry name" value="TUBULIN MONOGLYCYLASE TTLL3"/>
    <property type="match status" value="1"/>
</dbReference>
<dbReference type="Pfam" id="PF03133">
    <property type="entry name" value="TTL"/>
    <property type="match status" value="1"/>
</dbReference>
<dbReference type="SUPFAM" id="SSF56059">
    <property type="entry name" value="Glutathione synthetase ATP-binding domain-like"/>
    <property type="match status" value="1"/>
</dbReference>
<dbReference type="PROSITE" id="PS51221">
    <property type="entry name" value="TTL"/>
    <property type="match status" value="1"/>
</dbReference>
<proteinExistence type="evidence at protein level"/>
<sequence length="756" mass="86109">MTTQNTTPAGFTGNRNRYYNPVSKIQSLIHNLDAELVQLCKQCSVQKPLTSLNNSTSLGSHFSNFGALGGGSGSKTMGGSSSMGSNNFSPDSIGNLLARVRASTPLPRTVTSSPTAPEAQKRQMRNVYRTRVIDAYRNRRIFTVYGNYHTVRRALMRRGWLEKLPASRHAKLQSMSEDALLEHARRGNDYEAVVISKMINHFPAFFIWQGKGQRDLCAEVRPFRNRVRRSQFLDFSTKVGLVGCAEQERWYREDGVCGMSYPRFYRLGGNNLEERMAFIEDYQQTQARSLLLYVREHQPAELISENGTIFSTTLDFALGKVKKMVRHAEHYSLDDARIKPPTPAEIVENQTFMVQSTDVLKSNAKFKVSEKVMAEYARLAGLYLDQIESLRPDYRWDGSRNLWILKPGYQSRGIGIVIRSSLDDILQWTSNNQNKKYIVQKYIERPLLIYRTKFDIRQYMLLTITDTKVSIWTYRDCYLRFSSQEFTMDDLRESIHLTNNSVQKRYKNKTNRDSRLPKNNMWSLDQFKNYLRIMGAPDGSWSKTYNGFKQNLVAVVMASLDETELLQNAFELYGCDFMLDEHYNPILIEINSTPDLSPSTEITARICPMVLKDCIRVVVDLPKNPTAATGLFELAFEVNYSINKGADGKPLELNGKQMTLFENMPRMRNSPRTRLLRKILNNVKTSTTKKVEKVVEAPAKNVKNPTAKITKKKKLSASAGSSTAASAQPSTQNLTTKLILNPATRENLALQYTAPK</sequence>
<protein>
    <recommendedName>
        <fullName>Tubulin glycylase 3B</fullName>
        <shortName>dmTTLL3B</shortName>
        <ecNumber>6.3.2.-</ecNumber>
    </recommendedName>
</protein>
<feature type="chain" id="PRO_0000381796" description="Tubulin glycylase 3B">
    <location>
        <begin position="1"/>
        <end position="756"/>
    </location>
</feature>
<feature type="domain" description="TTL" evidence="2">
    <location>
        <begin position="272"/>
        <end position="629"/>
    </location>
</feature>
<feature type="region of interest" description="Disordered" evidence="3">
    <location>
        <begin position="104"/>
        <end position="123"/>
    </location>
</feature>
<feature type="region of interest" description="Disordered" evidence="3">
    <location>
        <begin position="709"/>
        <end position="736"/>
    </location>
</feature>
<feature type="compositionally biased region" description="Low complexity" evidence="3">
    <location>
        <begin position="716"/>
        <end position="727"/>
    </location>
</feature>
<feature type="binding site" evidence="1">
    <location>
        <begin position="440"/>
        <end position="443"/>
    </location>
    <ligand>
        <name>ATP</name>
        <dbReference type="ChEBI" id="CHEBI:30616"/>
    </ligand>
</feature>
<feature type="binding site" evidence="1">
    <location>
        <position position="453"/>
    </location>
    <ligand>
        <name>ATP</name>
        <dbReference type="ChEBI" id="CHEBI:30616"/>
    </ligand>
</feature>
<feature type="binding site" evidence="1">
    <location>
        <position position="455"/>
    </location>
    <ligand>
        <name>ATP</name>
        <dbReference type="ChEBI" id="CHEBI:30616"/>
    </ligand>
</feature>
<comment type="function">
    <text evidence="4">Essential glycylase which modifies both tubulin and non-tubulin proteins, generating side chains of glycine on the gamma-carboxyl groups of specific glutamate residues of target proteins. Monoglycylates alpha-tubulin by adding a single glycine chain to generate monoglycine side chains, but is not involved in elongation step to generate polyglycine side chains on alpha-tubulin. Has the ability to both mono- and polyglycylate non-tubulin proteins such as up (Troponin T). Required for early steps of spermatogenesis.</text>
</comment>
<comment type="subcellular location">
    <subcellularLocation>
        <location evidence="4">Cytoplasm</location>
        <location evidence="4">Cytoskeleton</location>
    </subcellularLocation>
    <subcellularLocation>
        <location evidence="4">Nucleus</location>
    </subcellularLocation>
</comment>
<gene>
    <name type="primary">TTLL3B</name>
    <name type="ORF">CG11201</name>
</gene>
<reference key="1">
    <citation type="journal article" date="2000" name="Science">
        <title>The genome sequence of Drosophila melanogaster.</title>
        <authorList>
            <person name="Adams M.D."/>
            <person name="Celniker S.E."/>
            <person name="Holt R.A."/>
            <person name="Evans C.A."/>
            <person name="Gocayne J.D."/>
            <person name="Amanatides P.G."/>
            <person name="Scherer S.E."/>
            <person name="Li P.W."/>
            <person name="Hoskins R.A."/>
            <person name="Galle R.F."/>
            <person name="George R.A."/>
            <person name="Lewis S.E."/>
            <person name="Richards S."/>
            <person name="Ashburner M."/>
            <person name="Henderson S.N."/>
            <person name="Sutton G.G."/>
            <person name="Wortman J.R."/>
            <person name="Yandell M.D."/>
            <person name="Zhang Q."/>
            <person name="Chen L.X."/>
            <person name="Brandon R.C."/>
            <person name="Rogers Y.-H.C."/>
            <person name="Blazej R.G."/>
            <person name="Champe M."/>
            <person name="Pfeiffer B.D."/>
            <person name="Wan K.H."/>
            <person name="Doyle C."/>
            <person name="Baxter E.G."/>
            <person name="Helt G."/>
            <person name="Nelson C.R."/>
            <person name="Miklos G.L.G."/>
            <person name="Abril J.F."/>
            <person name="Agbayani A."/>
            <person name="An H.-J."/>
            <person name="Andrews-Pfannkoch C."/>
            <person name="Baldwin D."/>
            <person name="Ballew R.M."/>
            <person name="Basu A."/>
            <person name="Baxendale J."/>
            <person name="Bayraktaroglu L."/>
            <person name="Beasley E.M."/>
            <person name="Beeson K.Y."/>
            <person name="Benos P.V."/>
            <person name="Berman B.P."/>
            <person name="Bhandari D."/>
            <person name="Bolshakov S."/>
            <person name="Borkova D."/>
            <person name="Botchan M.R."/>
            <person name="Bouck J."/>
            <person name="Brokstein P."/>
            <person name="Brottier P."/>
            <person name="Burtis K.C."/>
            <person name="Busam D.A."/>
            <person name="Butler H."/>
            <person name="Cadieu E."/>
            <person name="Center A."/>
            <person name="Chandra I."/>
            <person name="Cherry J.M."/>
            <person name="Cawley S."/>
            <person name="Dahlke C."/>
            <person name="Davenport L.B."/>
            <person name="Davies P."/>
            <person name="de Pablos B."/>
            <person name="Delcher A."/>
            <person name="Deng Z."/>
            <person name="Mays A.D."/>
            <person name="Dew I."/>
            <person name="Dietz S.M."/>
            <person name="Dodson K."/>
            <person name="Doup L.E."/>
            <person name="Downes M."/>
            <person name="Dugan-Rocha S."/>
            <person name="Dunkov B.C."/>
            <person name="Dunn P."/>
            <person name="Durbin K.J."/>
            <person name="Evangelista C.C."/>
            <person name="Ferraz C."/>
            <person name="Ferriera S."/>
            <person name="Fleischmann W."/>
            <person name="Fosler C."/>
            <person name="Gabrielian A.E."/>
            <person name="Garg N.S."/>
            <person name="Gelbart W.M."/>
            <person name="Glasser K."/>
            <person name="Glodek A."/>
            <person name="Gong F."/>
            <person name="Gorrell J.H."/>
            <person name="Gu Z."/>
            <person name="Guan P."/>
            <person name="Harris M."/>
            <person name="Harris N.L."/>
            <person name="Harvey D.A."/>
            <person name="Heiman T.J."/>
            <person name="Hernandez J.R."/>
            <person name="Houck J."/>
            <person name="Hostin D."/>
            <person name="Houston K.A."/>
            <person name="Howland T.J."/>
            <person name="Wei M.-H."/>
            <person name="Ibegwam C."/>
            <person name="Jalali M."/>
            <person name="Kalush F."/>
            <person name="Karpen G.H."/>
            <person name="Ke Z."/>
            <person name="Kennison J.A."/>
            <person name="Ketchum K.A."/>
            <person name="Kimmel B.E."/>
            <person name="Kodira C.D."/>
            <person name="Kraft C.L."/>
            <person name="Kravitz S."/>
            <person name="Kulp D."/>
            <person name="Lai Z."/>
            <person name="Lasko P."/>
            <person name="Lei Y."/>
            <person name="Levitsky A.A."/>
            <person name="Li J.H."/>
            <person name="Li Z."/>
            <person name="Liang Y."/>
            <person name="Lin X."/>
            <person name="Liu X."/>
            <person name="Mattei B."/>
            <person name="McIntosh T.C."/>
            <person name="McLeod M.P."/>
            <person name="McPherson D."/>
            <person name="Merkulov G."/>
            <person name="Milshina N.V."/>
            <person name="Mobarry C."/>
            <person name="Morris J."/>
            <person name="Moshrefi A."/>
            <person name="Mount S.M."/>
            <person name="Moy M."/>
            <person name="Murphy B."/>
            <person name="Murphy L."/>
            <person name="Muzny D.M."/>
            <person name="Nelson D.L."/>
            <person name="Nelson D.R."/>
            <person name="Nelson K.A."/>
            <person name="Nixon K."/>
            <person name="Nusskern D.R."/>
            <person name="Pacleb J.M."/>
            <person name="Palazzolo M."/>
            <person name="Pittman G.S."/>
            <person name="Pan S."/>
            <person name="Pollard J."/>
            <person name="Puri V."/>
            <person name="Reese M.G."/>
            <person name="Reinert K."/>
            <person name="Remington K."/>
            <person name="Saunders R.D.C."/>
            <person name="Scheeler F."/>
            <person name="Shen H."/>
            <person name="Shue B.C."/>
            <person name="Siden-Kiamos I."/>
            <person name="Simpson M."/>
            <person name="Skupski M.P."/>
            <person name="Smith T.J."/>
            <person name="Spier E."/>
            <person name="Spradling A.C."/>
            <person name="Stapleton M."/>
            <person name="Strong R."/>
            <person name="Sun E."/>
            <person name="Svirskas R."/>
            <person name="Tector C."/>
            <person name="Turner R."/>
            <person name="Venter E."/>
            <person name="Wang A.H."/>
            <person name="Wang X."/>
            <person name="Wang Z.-Y."/>
            <person name="Wassarman D.A."/>
            <person name="Weinstock G.M."/>
            <person name="Weissenbach J."/>
            <person name="Williams S.M."/>
            <person name="Woodage T."/>
            <person name="Worley K.C."/>
            <person name="Wu D."/>
            <person name="Yang S."/>
            <person name="Yao Q.A."/>
            <person name="Ye J."/>
            <person name="Yeh R.-F."/>
            <person name="Zaveri J.S."/>
            <person name="Zhan M."/>
            <person name="Zhang G."/>
            <person name="Zhao Q."/>
            <person name="Zheng L."/>
            <person name="Zheng X.H."/>
            <person name="Zhong F.N."/>
            <person name="Zhong W."/>
            <person name="Zhou X."/>
            <person name="Zhu S.C."/>
            <person name="Zhu X."/>
            <person name="Smith H.O."/>
            <person name="Gibbs R.A."/>
            <person name="Myers E.W."/>
            <person name="Rubin G.M."/>
            <person name="Venter J.C."/>
        </authorList>
    </citation>
    <scope>NUCLEOTIDE SEQUENCE [LARGE SCALE GENOMIC DNA]</scope>
    <source>
        <strain>Berkeley</strain>
    </source>
</reference>
<reference key="2">
    <citation type="journal article" date="2002" name="Genome Biol.">
        <title>Annotation of the Drosophila melanogaster euchromatic genome: a systematic review.</title>
        <authorList>
            <person name="Misra S."/>
            <person name="Crosby M.A."/>
            <person name="Mungall C.J."/>
            <person name="Matthews B.B."/>
            <person name="Campbell K.S."/>
            <person name="Hradecky P."/>
            <person name="Huang Y."/>
            <person name="Kaminker J.S."/>
            <person name="Millburn G.H."/>
            <person name="Prochnik S.E."/>
            <person name="Smith C.D."/>
            <person name="Tupy J.L."/>
            <person name="Whitfield E.J."/>
            <person name="Bayraktaroglu L."/>
            <person name="Berman B.P."/>
            <person name="Bettencourt B.R."/>
            <person name="Celniker S.E."/>
            <person name="de Grey A.D.N.J."/>
            <person name="Drysdale R.A."/>
            <person name="Harris N.L."/>
            <person name="Richter J."/>
            <person name="Russo S."/>
            <person name="Schroeder A.J."/>
            <person name="Shu S.Q."/>
            <person name="Stapleton M."/>
            <person name="Yamada C."/>
            <person name="Ashburner M."/>
            <person name="Gelbart W.M."/>
            <person name="Rubin G.M."/>
            <person name="Lewis S.E."/>
        </authorList>
    </citation>
    <scope>GENOME REANNOTATION</scope>
    <source>
        <strain>Berkeley</strain>
    </source>
</reference>
<reference key="3">
    <citation type="submission" date="2005-03" db="EMBL/GenBank/DDBJ databases">
        <authorList>
            <person name="Stapleton M."/>
            <person name="Carlson J.W."/>
            <person name="Chavez C."/>
            <person name="Frise E."/>
            <person name="George R.A."/>
            <person name="Pacleb J.M."/>
            <person name="Park S."/>
            <person name="Wan K.H."/>
            <person name="Yu C."/>
            <person name="Rubin G.M."/>
            <person name="Celniker S.E."/>
        </authorList>
    </citation>
    <scope>NUCLEOTIDE SEQUENCE [LARGE SCALE MRNA]</scope>
    <source>
        <strain>Berkeley</strain>
        <tissue>Head</tissue>
    </source>
</reference>
<reference key="4">
    <citation type="journal article" date="2009" name="Cell">
        <title>Evolutionary divergence of enzymatic mechanisms for posttranslational polyglycylation.</title>
        <authorList>
            <person name="Rogowski K."/>
            <person name="Juge F."/>
            <person name="van Dijk J."/>
            <person name="Wloga D."/>
            <person name="Strub J.-M."/>
            <person name="Levilliers N."/>
            <person name="Thomas D."/>
            <person name="Bre M.-H."/>
            <person name="Van Dorsselaer A."/>
            <person name="Gaertig J."/>
            <person name="Janke C."/>
        </authorList>
    </citation>
    <scope>FUNCTION</scope>
    <scope>CATALYTIC ACTIVITY</scope>
    <scope>SUBCELLULAR LOCATION</scope>
</reference>
<evidence type="ECO:0000250" key="1">
    <source>
        <dbReference type="UniProtKB" id="Q6ZT98"/>
    </source>
</evidence>
<evidence type="ECO:0000255" key="2">
    <source>
        <dbReference type="PROSITE-ProRule" id="PRU00568"/>
    </source>
</evidence>
<evidence type="ECO:0000256" key="3">
    <source>
        <dbReference type="SAM" id="MobiDB-lite"/>
    </source>
</evidence>
<evidence type="ECO:0000269" key="4">
    <source>
    </source>
</evidence>
<keyword id="KW-0067">ATP-binding</keyword>
<keyword id="KW-0963">Cytoplasm</keyword>
<keyword id="KW-0206">Cytoskeleton</keyword>
<keyword id="KW-0221">Differentiation</keyword>
<keyword id="KW-0436">Ligase</keyword>
<keyword id="KW-0493">Microtubule</keyword>
<keyword id="KW-0547">Nucleotide-binding</keyword>
<keyword id="KW-0539">Nucleus</keyword>
<keyword id="KW-1185">Reference proteome</keyword>
<keyword id="KW-0744">Spermatogenesis</keyword>